<feature type="chain" id="PRO_0000277775" description="Integration host factor subunit alpha">
    <location>
        <begin position="1"/>
        <end position="98"/>
    </location>
</feature>
<feature type="region of interest" description="Disordered" evidence="2">
    <location>
        <begin position="49"/>
        <end position="71"/>
    </location>
</feature>
<proteinExistence type="inferred from homology"/>
<protein>
    <recommendedName>
        <fullName evidence="1">Integration host factor subunit alpha</fullName>
        <shortName evidence="1">IHF-alpha</shortName>
    </recommendedName>
</protein>
<comment type="function">
    <text evidence="1">This protein is one of the two subunits of integration host factor, a specific DNA-binding protein that functions in genetic recombination as well as in transcriptional and translational control.</text>
</comment>
<comment type="subunit">
    <text evidence="1">Heterodimer of an alpha and a beta chain.</text>
</comment>
<comment type="similarity">
    <text evidence="1">Belongs to the bacterial histone-like protein family.</text>
</comment>
<reference key="1">
    <citation type="journal article" date="2002" name="Nat. Biotechnol.">
        <title>Genome sequence of the dissimilatory metal ion-reducing bacterium Shewanella oneidensis.</title>
        <authorList>
            <person name="Heidelberg J.F."/>
            <person name="Paulsen I.T."/>
            <person name="Nelson K.E."/>
            <person name="Gaidos E.J."/>
            <person name="Nelson W.C."/>
            <person name="Read T.D."/>
            <person name="Eisen J.A."/>
            <person name="Seshadri R."/>
            <person name="Ward N.L."/>
            <person name="Methe B.A."/>
            <person name="Clayton R.A."/>
            <person name="Meyer T."/>
            <person name="Tsapin A."/>
            <person name="Scott J."/>
            <person name="Beanan M.J."/>
            <person name="Brinkac L.M."/>
            <person name="Daugherty S.C."/>
            <person name="DeBoy R.T."/>
            <person name="Dodson R.J."/>
            <person name="Durkin A.S."/>
            <person name="Haft D.H."/>
            <person name="Kolonay J.F."/>
            <person name="Madupu R."/>
            <person name="Peterson J.D."/>
            <person name="Umayam L.A."/>
            <person name="White O."/>
            <person name="Wolf A.M."/>
            <person name="Vamathevan J.J."/>
            <person name="Weidman J.F."/>
            <person name="Impraim M."/>
            <person name="Lee K."/>
            <person name="Berry K.J."/>
            <person name="Lee C."/>
            <person name="Mueller J."/>
            <person name="Khouri H.M."/>
            <person name="Gill J."/>
            <person name="Utterback T.R."/>
            <person name="McDonald L.A."/>
            <person name="Feldblyum T.V."/>
            <person name="Smith H.O."/>
            <person name="Venter J.C."/>
            <person name="Nealson K.H."/>
            <person name="Fraser C.M."/>
        </authorList>
    </citation>
    <scope>NUCLEOTIDE SEQUENCE [LARGE SCALE GENOMIC DNA]</scope>
    <source>
        <strain>ATCC 700550 / JCM 31522 / CIP 106686 / LMG 19005 / NCIMB 14063 / MR-1</strain>
    </source>
</reference>
<gene>
    <name evidence="1" type="primary">ihfA</name>
    <name evidence="1" type="synonym">himA</name>
    <name type="ordered locus">SO_2087</name>
</gene>
<dbReference type="EMBL" id="AE014299">
    <property type="protein sequence ID" value="AAN55134.1"/>
    <property type="molecule type" value="Genomic_DNA"/>
</dbReference>
<dbReference type="RefSeq" id="NP_717690.1">
    <property type="nucleotide sequence ID" value="NC_004347.2"/>
</dbReference>
<dbReference type="RefSeq" id="WP_011072151.1">
    <property type="nucleotide sequence ID" value="NC_004347.2"/>
</dbReference>
<dbReference type="SMR" id="Q8EF98"/>
<dbReference type="STRING" id="211586.SO_2087"/>
<dbReference type="PaxDb" id="211586-SO_2087"/>
<dbReference type="KEGG" id="son:SO_2087"/>
<dbReference type="PATRIC" id="fig|1028802.3.peg.1257"/>
<dbReference type="eggNOG" id="COG0776">
    <property type="taxonomic scope" value="Bacteria"/>
</dbReference>
<dbReference type="HOGENOM" id="CLU_105066_1_3_6"/>
<dbReference type="OrthoDB" id="9797747at2"/>
<dbReference type="PhylomeDB" id="Q8EF98"/>
<dbReference type="BioCyc" id="SONE211586:G1GMP-1918-MONOMER"/>
<dbReference type="Proteomes" id="UP000008186">
    <property type="component" value="Chromosome"/>
</dbReference>
<dbReference type="GO" id="GO:0005829">
    <property type="term" value="C:cytosol"/>
    <property type="evidence" value="ECO:0000318"/>
    <property type="project" value="GO_Central"/>
</dbReference>
<dbReference type="GO" id="GO:0003677">
    <property type="term" value="F:DNA binding"/>
    <property type="evidence" value="ECO:0000318"/>
    <property type="project" value="GO_Central"/>
</dbReference>
<dbReference type="GO" id="GO:0030527">
    <property type="term" value="F:structural constituent of chromatin"/>
    <property type="evidence" value="ECO:0007669"/>
    <property type="project" value="InterPro"/>
</dbReference>
<dbReference type="GO" id="GO:0006310">
    <property type="term" value="P:DNA recombination"/>
    <property type="evidence" value="ECO:0007669"/>
    <property type="project" value="UniProtKB-UniRule"/>
</dbReference>
<dbReference type="GO" id="GO:0009893">
    <property type="term" value="P:positive regulation of metabolic process"/>
    <property type="evidence" value="ECO:0007669"/>
    <property type="project" value="UniProtKB-ARBA"/>
</dbReference>
<dbReference type="GO" id="GO:0006355">
    <property type="term" value="P:regulation of DNA-templated transcription"/>
    <property type="evidence" value="ECO:0007669"/>
    <property type="project" value="UniProtKB-UniRule"/>
</dbReference>
<dbReference type="GO" id="GO:0006417">
    <property type="term" value="P:regulation of translation"/>
    <property type="evidence" value="ECO:0007669"/>
    <property type="project" value="UniProtKB-UniRule"/>
</dbReference>
<dbReference type="CDD" id="cd13835">
    <property type="entry name" value="IHF_A"/>
    <property type="match status" value="1"/>
</dbReference>
<dbReference type="FunFam" id="4.10.520.10:FF:000002">
    <property type="entry name" value="Integration host factor subunit alpha"/>
    <property type="match status" value="1"/>
</dbReference>
<dbReference type="Gene3D" id="4.10.520.10">
    <property type="entry name" value="IHF-like DNA-binding proteins"/>
    <property type="match status" value="1"/>
</dbReference>
<dbReference type="HAMAP" id="MF_00380">
    <property type="entry name" value="IHF_alpha"/>
    <property type="match status" value="1"/>
</dbReference>
<dbReference type="InterPro" id="IPR000119">
    <property type="entry name" value="Hist_DNA-bd"/>
</dbReference>
<dbReference type="InterPro" id="IPR020816">
    <property type="entry name" value="Histone-like_DNA-bd_CS"/>
</dbReference>
<dbReference type="InterPro" id="IPR010992">
    <property type="entry name" value="IHF-like_DNA-bd_dom_sf"/>
</dbReference>
<dbReference type="InterPro" id="IPR005684">
    <property type="entry name" value="IHF_alpha"/>
</dbReference>
<dbReference type="NCBIfam" id="TIGR00987">
    <property type="entry name" value="himA"/>
    <property type="match status" value="1"/>
</dbReference>
<dbReference type="NCBIfam" id="NF001401">
    <property type="entry name" value="PRK00285.1"/>
    <property type="match status" value="1"/>
</dbReference>
<dbReference type="PANTHER" id="PTHR33175">
    <property type="entry name" value="DNA-BINDING PROTEIN HU"/>
    <property type="match status" value="1"/>
</dbReference>
<dbReference type="PANTHER" id="PTHR33175:SF2">
    <property type="entry name" value="INTEGRATION HOST FACTOR SUBUNIT ALPHA"/>
    <property type="match status" value="1"/>
</dbReference>
<dbReference type="Pfam" id="PF00216">
    <property type="entry name" value="Bac_DNA_binding"/>
    <property type="match status" value="1"/>
</dbReference>
<dbReference type="PRINTS" id="PR01727">
    <property type="entry name" value="DNABINDINGHU"/>
</dbReference>
<dbReference type="SMART" id="SM00411">
    <property type="entry name" value="BHL"/>
    <property type="match status" value="1"/>
</dbReference>
<dbReference type="SUPFAM" id="SSF47729">
    <property type="entry name" value="IHF-like DNA-binding proteins"/>
    <property type="match status" value="1"/>
</dbReference>
<dbReference type="PROSITE" id="PS00045">
    <property type="entry name" value="HISTONE_LIKE"/>
    <property type="match status" value="1"/>
</dbReference>
<organism>
    <name type="scientific">Shewanella oneidensis (strain ATCC 700550 / JCM 31522 / CIP 106686 / LMG 19005 / NCIMB 14063 / MR-1)</name>
    <dbReference type="NCBI Taxonomy" id="211586"/>
    <lineage>
        <taxon>Bacteria</taxon>
        <taxon>Pseudomonadati</taxon>
        <taxon>Pseudomonadota</taxon>
        <taxon>Gammaproteobacteria</taxon>
        <taxon>Alteromonadales</taxon>
        <taxon>Shewanellaceae</taxon>
        <taxon>Shewanella</taxon>
    </lineage>
</organism>
<evidence type="ECO:0000255" key="1">
    <source>
        <dbReference type="HAMAP-Rule" id="MF_00380"/>
    </source>
</evidence>
<evidence type="ECO:0000256" key="2">
    <source>
        <dbReference type="SAM" id="MobiDB-lite"/>
    </source>
</evidence>
<keyword id="KW-0233">DNA recombination</keyword>
<keyword id="KW-0238">DNA-binding</keyword>
<keyword id="KW-1185">Reference proteome</keyword>
<keyword id="KW-0804">Transcription</keyword>
<keyword id="KW-0805">Transcription regulation</keyword>
<keyword id="KW-0810">Translation regulation</keyword>
<name>IHFA_SHEON</name>
<sequence>MALTKAEMAEHLFETLGINKRVAKEMVESFFEEIRGALESGEQVKLSGFGNFDLRDKNQRPGRNPKTGEDIPISARRVVTFRPGQKLKTRVEAANTGK</sequence>
<accession>Q8EF98</accession>